<keyword id="KW-1003">Cell membrane</keyword>
<keyword id="KW-0472">Membrane</keyword>
<keyword id="KW-1185">Reference proteome</keyword>
<keyword id="KW-0812">Transmembrane</keyword>
<keyword id="KW-1133">Transmembrane helix</keyword>
<dbReference type="EMBL" id="AF017113">
    <property type="protein sequence ID" value="AAC67260.1"/>
    <property type="molecule type" value="Genomic_DNA"/>
</dbReference>
<dbReference type="EMBL" id="AL009126">
    <property type="protein sequence ID" value="CAB15545.1"/>
    <property type="molecule type" value="Genomic_DNA"/>
</dbReference>
<dbReference type="PIR" id="D70042">
    <property type="entry name" value="D70042"/>
</dbReference>
<dbReference type="RefSeq" id="NP_391408.1">
    <property type="nucleotide sequence ID" value="NC_000964.3"/>
</dbReference>
<dbReference type="RefSeq" id="WP_003242677.1">
    <property type="nucleotide sequence ID" value="NZ_OZ025638.1"/>
</dbReference>
<dbReference type="SMR" id="O34792"/>
<dbReference type="FunCoup" id="O34792">
    <property type="interactions" value="21"/>
</dbReference>
<dbReference type="STRING" id="224308.BSU35280"/>
<dbReference type="PaxDb" id="224308-BSU35280"/>
<dbReference type="EnsemblBacteria" id="CAB15545">
    <property type="protein sequence ID" value="CAB15545"/>
    <property type="gene ID" value="BSU_35280"/>
</dbReference>
<dbReference type="GeneID" id="938534"/>
<dbReference type="KEGG" id="bsu:BSU35280"/>
<dbReference type="PATRIC" id="fig|224308.179.peg.3818"/>
<dbReference type="eggNOG" id="COG1284">
    <property type="taxonomic scope" value="Bacteria"/>
</dbReference>
<dbReference type="InParanoid" id="O34792"/>
<dbReference type="OrthoDB" id="1758221at2"/>
<dbReference type="PhylomeDB" id="O34792"/>
<dbReference type="BioCyc" id="BSUB:BSU35280-MONOMER"/>
<dbReference type="Proteomes" id="UP000001570">
    <property type="component" value="Chromosome"/>
</dbReference>
<dbReference type="GO" id="GO:0005886">
    <property type="term" value="C:plasma membrane"/>
    <property type="evidence" value="ECO:0007669"/>
    <property type="project" value="UniProtKB-SubCell"/>
</dbReference>
<dbReference type="CDD" id="cd16380">
    <property type="entry name" value="YitT_C"/>
    <property type="match status" value="1"/>
</dbReference>
<dbReference type="Gene3D" id="3.30.70.120">
    <property type="match status" value="1"/>
</dbReference>
<dbReference type="InterPro" id="IPR019264">
    <property type="entry name" value="DUF2179"/>
</dbReference>
<dbReference type="InterPro" id="IPR015867">
    <property type="entry name" value="N-reg_PII/ATP_PRibTrfase_C"/>
</dbReference>
<dbReference type="InterPro" id="IPR051461">
    <property type="entry name" value="UPF0750_membrane"/>
</dbReference>
<dbReference type="InterPro" id="IPR003740">
    <property type="entry name" value="YitT"/>
</dbReference>
<dbReference type="PANTHER" id="PTHR33545:SF9">
    <property type="entry name" value="UPF0750 MEMBRANE PROTEIN YITE"/>
    <property type="match status" value="1"/>
</dbReference>
<dbReference type="PANTHER" id="PTHR33545">
    <property type="entry name" value="UPF0750 MEMBRANE PROTEIN YITT-RELATED"/>
    <property type="match status" value="1"/>
</dbReference>
<dbReference type="Pfam" id="PF10035">
    <property type="entry name" value="DUF2179"/>
    <property type="match status" value="1"/>
</dbReference>
<dbReference type="Pfam" id="PF02588">
    <property type="entry name" value="YitT_membrane"/>
    <property type="match status" value="1"/>
</dbReference>
<dbReference type="PIRSF" id="PIRSF006483">
    <property type="entry name" value="Membrane_protein_YitT"/>
    <property type="match status" value="1"/>
</dbReference>
<comment type="subcellular location">
    <subcellularLocation>
        <location evidence="3">Cell membrane</location>
        <topology evidence="3">Multi-pass membrane protein</topology>
    </subcellularLocation>
</comment>
<comment type="disruption phenotype">
    <text evidence="2">Cells lacking this gene show no apparent growth, sporulation, or germination defect. Also shows no defect in the synthesis of the membrane-bound CccB cytochrome or any other cytochrome with covalently bound heme.</text>
</comment>
<comment type="similarity">
    <text evidence="3">Belongs to the UPF0750 family.</text>
</comment>
<evidence type="ECO:0000255" key="1"/>
<evidence type="ECO:0000269" key="2">
    <source>
    </source>
</evidence>
<evidence type="ECO:0000305" key="3"/>
<feature type="chain" id="PRO_0000383357" description="UPF0750 membrane protein YvjA">
    <location>
        <begin position="1"/>
        <end position="281"/>
    </location>
</feature>
<feature type="transmembrane region" description="Helical" evidence="1">
    <location>
        <begin position="14"/>
        <end position="34"/>
    </location>
</feature>
<feature type="transmembrane region" description="Helical" evidence="1">
    <location>
        <begin position="56"/>
        <end position="76"/>
    </location>
</feature>
<feature type="transmembrane region" description="Helical" evidence="1">
    <location>
        <begin position="77"/>
        <end position="97"/>
    </location>
</feature>
<feature type="transmembrane region" description="Helical" evidence="1">
    <location>
        <begin position="108"/>
        <end position="128"/>
    </location>
</feature>
<feature type="transmembrane region" description="Helical" evidence="1">
    <location>
        <begin position="149"/>
        <end position="169"/>
    </location>
</feature>
<accession>O34792</accession>
<accession>Q795D4</accession>
<organism>
    <name type="scientific">Bacillus subtilis (strain 168)</name>
    <dbReference type="NCBI Taxonomy" id="224308"/>
    <lineage>
        <taxon>Bacteria</taxon>
        <taxon>Bacillati</taxon>
        <taxon>Bacillota</taxon>
        <taxon>Bacilli</taxon>
        <taxon>Bacillales</taxon>
        <taxon>Bacillaceae</taxon>
        <taxon>Bacillus</taxon>
    </lineage>
</organism>
<reference key="1">
    <citation type="submission" date="1997-11" db="EMBL/GenBank/DDBJ databases">
        <title>Nucleotide sequence of the 300-304 chromosomal segment of Bacillus subtilis.</title>
        <authorList>
            <person name="Lazarevic V."/>
            <person name="Soldo B."/>
            <person name="Rivolta C."/>
            <person name="Reynolds S."/>
            <person name="Mauel C."/>
            <person name="Karamata D."/>
        </authorList>
    </citation>
    <scope>NUCLEOTIDE SEQUENCE [GENOMIC DNA]</scope>
</reference>
<reference key="2">
    <citation type="journal article" date="1997" name="Nature">
        <title>The complete genome sequence of the Gram-positive bacterium Bacillus subtilis.</title>
        <authorList>
            <person name="Kunst F."/>
            <person name="Ogasawara N."/>
            <person name="Moszer I."/>
            <person name="Albertini A.M."/>
            <person name="Alloni G."/>
            <person name="Azevedo V."/>
            <person name="Bertero M.G."/>
            <person name="Bessieres P."/>
            <person name="Bolotin A."/>
            <person name="Borchert S."/>
            <person name="Borriss R."/>
            <person name="Boursier L."/>
            <person name="Brans A."/>
            <person name="Braun M."/>
            <person name="Brignell S.C."/>
            <person name="Bron S."/>
            <person name="Brouillet S."/>
            <person name="Bruschi C.V."/>
            <person name="Caldwell B."/>
            <person name="Capuano V."/>
            <person name="Carter N.M."/>
            <person name="Choi S.-K."/>
            <person name="Codani J.-J."/>
            <person name="Connerton I.F."/>
            <person name="Cummings N.J."/>
            <person name="Daniel R.A."/>
            <person name="Denizot F."/>
            <person name="Devine K.M."/>
            <person name="Duesterhoeft A."/>
            <person name="Ehrlich S.D."/>
            <person name="Emmerson P.T."/>
            <person name="Entian K.-D."/>
            <person name="Errington J."/>
            <person name="Fabret C."/>
            <person name="Ferrari E."/>
            <person name="Foulger D."/>
            <person name="Fritz C."/>
            <person name="Fujita M."/>
            <person name="Fujita Y."/>
            <person name="Fuma S."/>
            <person name="Galizzi A."/>
            <person name="Galleron N."/>
            <person name="Ghim S.-Y."/>
            <person name="Glaser P."/>
            <person name="Goffeau A."/>
            <person name="Golightly E.J."/>
            <person name="Grandi G."/>
            <person name="Guiseppi G."/>
            <person name="Guy B.J."/>
            <person name="Haga K."/>
            <person name="Haiech J."/>
            <person name="Harwood C.R."/>
            <person name="Henaut A."/>
            <person name="Hilbert H."/>
            <person name="Holsappel S."/>
            <person name="Hosono S."/>
            <person name="Hullo M.-F."/>
            <person name="Itaya M."/>
            <person name="Jones L.-M."/>
            <person name="Joris B."/>
            <person name="Karamata D."/>
            <person name="Kasahara Y."/>
            <person name="Klaerr-Blanchard M."/>
            <person name="Klein C."/>
            <person name="Kobayashi Y."/>
            <person name="Koetter P."/>
            <person name="Koningstein G."/>
            <person name="Krogh S."/>
            <person name="Kumano M."/>
            <person name="Kurita K."/>
            <person name="Lapidus A."/>
            <person name="Lardinois S."/>
            <person name="Lauber J."/>
            <person name="Lazarevic V."/>
            <person name="Lee S.-M."/>
            <person name="Levine A."/>
            <person name="Liu H."/>
            <person name="Masuda S."/>
            <person name="Mauel C."/>
            <person name="Medigue C."/>
            <person name="Medina N."/>
            <person name="Mellado R.P."/>
            <person name="Mizuno M."/>
            <person name="Moestl D."/>
            <person name="Nakai S."/>
            <person name="Noback M."/>
            <person name="Noone D."/>
            <person name="O'Reilly M."/>
            <person name="Ogawa K."/>
            <person name="Ogiwara A."/>
            <person name="Oudega B."/>
            <person name="Park S.-H."/>
            <person name="Parro V."/>
            <person name="Pohl T.M."/>
            <person name="Portetelle D."/>
            <person name="Porwollik S."/>
            <person name="Prescott A.M."/>
            <person name="Presecan E."/>
            <person name="Pujic P."/>
            <person name="Purnelle B."/>
            <person name="Rapoport G."/>
            <person name="Rey M."/>
            <person name="Reynolds S."/>
            <person name="Rieger M."/>
            <person name="Rivolta C."/>
            <person name="Rocha E."/>
            <person name="Roche B."/>
            <person name="Rose M."/>
            <person name="Sadaie Y."/>
            <person name="Sato T."/>
            <person name="Scanlan E."/>
            <person name="Schleich S."/>
            <person name="Schroeter R."/>
            <person name="Scoffone F."/>
            <person name="Sekiguchi J."/>
            <person name="Sekowska A."/>
            <person name="Seror S.J."/>
            <person name="Serror P."/>
            <person name="Shin B.-S."/>
            <person name="Soldo B."/>
            <person name="Sorokin A."/>
            <person name="Tacconi E."/>
            <person name="Takagi T."/>
            <person name="Takahashi H."/>
            <person name="Takemaru K."/>
            <person name="Takeuchi M."/>
            <person name="Tamakoshi A."/>
            <person name="Tanaka T."/>
            <person name="Terpstra P."/>
            <person name="Tognoni A."/>
            <person name="Tosato V."/>
            <person name="Uchiyama S."/>
            <person name="Vandenbol M."/>
            <person name="Vannier F."/>
            <person name="Vassarotti A."/>
            <person name="Viari A."/>
            <person name="Wambutt R."/>
            <person name="Wedler E."/>
            <person name="Wedler H."/>
            <person name="Weitzenegger T."/>
            <person name="Winters P."/>
            <person name="Wipat A."/>
            <person name="Yamamoto H."/>
            <person name="Yamane K."/>
            <person name="Yasumoto K."/>
            <person name="Yata K."/>
            <person name="Yoshida K."/>
            <person name="Yoshikawa H.-F."/>
            <person name="Zumstein E."/>
            <person name="Yoshikawa H."/>
            <person name="Danchin A."/>
        </authorList>
    </citation>
    <scope>NUCLEOTIDE SEQUENCE [LARGE SCALE GENOMIC DNA]</scope>
    <source>
        <strain>168</strain>
    </source>
</reference>
<reference key="3">
    <citation type="journal article" date="1999" name="J. Biol. Chem.">
        <title>Bacillus subtilis contains two small c-type cytochromes with homologous heme domains but different types of membrane anchors.</title>
        <authorList>
            <person name="Bengtsson J."/>
            <person name="Rivolta C."/>
            <person name="Hederstedt L."/>
            <person name="Karamata D."/>
        </authorList>
    </citation>
    <scope>DISRUPTION PHENOTYPE</scope>
    <source>
        <strain>168</strain>
    </source>
</reference>
<protein>
    <recommendedName>
        <fullName>UPF0750 membrane protein YvjA</fullName>
    </recommendedName>
</protein>
<gene>
    <name type="primary">yvjA</name>
    <name type="ordered locus">BSU35280</name>
</gene>
<proteinExistence type="inferred from homology"/>
<name>YVJA_BACSU</name>
<sequence>MDVRNKTLWILRDYVYILIGAAITAVSFNVFLLPNKIAAGGVSGISTILQSYGFEAAYVQWIINIPLFIAGVILLGGKFGLKTLAGSVFLPLVVFLTRDIQPATHHELLAAIFGGVGIGIGIGIVYLGKGSTGGTALAAQIIHKYSGLSLGKCLAIIDGMIVVTAMIVFNIEQGLYAMLGVYVSSKTIDVVQVGFNRSKMALIITKQEQAVKEAVLQKIDRGVTKISAVGGYTDDDRPILMCVVGQTEFTKLKQIVKQIDESAFVIVADASEVLGEGFKRA</sequence>